<proteinExistence type="evidence at protein level"/>
<organism>
    <name type="scientific">Staphylococcus aureus (strain N315)</name>
    <dbReference type="NCBI Taxonomy" id="158879"/>
    <lineage>
        <taxon>Bacteria</taxon>
        <taxon>Bacillati</taxon>
        <taxon>Bacillota</taxon>
        <taxon>Bacilli</taxon>
        <taxon>Bacillales</taxon>
        <taxon>Staphylococcaceae</taxon>
        <taxon>Staphylococcus</taxon>
    </lineage>
</organism>
<accession>P67417</accession>
<accession>Q99RU2</accession>
<dbReference type="EC" id="4.2.1.49" evidence="1"/>
<dbReference type="EMBL" id="BA000018">
    <property type="protein sequence ID" value="BAB43423.1"/>
    <property type="molecule type" value="Genomic_DNA"/>
</dbReference>
<dbReference type="PIR" id="F90032">
    <property type="entry name" value="F90032"/>
</dbReference>
<dbReference type="RefSeq" id="WP_001226823.1">
    <property type="nucleotide sequence ID" value="NC_002745.2"/>
</dbReference>
<dbReference type="SMR" id="P67417"/>
<dbReference type="EnsemblBacteria" id="BAB43423">
    <property type="protein sequence ID" value="BAB43423"/>
    <property type="gene ID" value="BAB43423"/>
</dbReference>
<dbReference type="KEGG" id="sau:SA2122"/>
<dbReference type="HOGENOM" id="CLU_018868_0_1_9"/>
<dbReference type="UniPathway" id="UPA00379">
    <property type="reaction ID" value="UER00550"/>
</dbReference>
<dbReference type="GO" id="GO:0005737">
    <property type="term" value="C:cytoplasm"/>
    <property type="evidence" value="ECO:0007669"/>
    <property type="project" value="UniProtKB-SubCell"/>
</dbReference>
<dbReference type="GO" id="GO:0016153">
    <property type="term" value="F:urocanate hydratase activity"/>
    <property type="evidence" value="ECO:0007669"/>
    <property type="project" value="UniProtKB-UniRule"/>
</dbReference>
<dbReference type="GO" id="GO:0019556">
    <property type="term" value="P:L-histidine catabolic process to glutamate and formamide"/>
    <property type="evidence" value="ECO:0007669"/>
    <property type="project" value="UniProtKB-UniPathway"/>
</dbReference>
<dbReference type="GO" id="GO:0019557">
    <property type="term" value="P:L-histidine catabolic process to glutamate and formate"/>
    <property type="evidence" value="ECO:0007669"/>
    <property type="project" value="UniProtKB-UniPathway"/>
</dbReference>
<dbReference type="FunFam" id="3.40.50.10730:FF:000001">
    <property type="entry name" value="Urocanate hydratase"/>
    <property type="match status" value="1"/>
</dbReference>
<dbReference type="Gene3D" id="3.40.50.10730">
    <property type="entry name" value="Urocanase like domains"/>
    <property type="match status" value="1"/>
</dbReference>
<dbReference type="Gene3D" id="3.40.1770.10">
    <property type="entry name" value="Urocanase superfamily"/>
    <property type="match status" value="1"/>
</dbReference>
<dbReference type="HAMAP" id="MF_00577">
    <property type="entry name" value="HutU"/>
    <property type="match status" value="1"/>
</dbReference>
<dbReference type="InterPro" id="IPR055351">
    <property type="entry name" value="Urocanase"/>
</dbReference>
<dbReference type="InterPro" id="IPR023637">
    <property type="entry name" value="Urocanase-like"/>
</dbReference>
<dbReference type="InterPro" id="IPR035401">
    <property type="entry name" value="Urocanase_C"/>
</dbReference>
<dbReference type="InterPro" id="IPR038364">
    <property type="entry name" value="Urocanase_central_sf"/>
</dbReference>
<dbReference type="InterPro" id="IPR023636">
    <property type="entry name" value="Urocanase_CS"/>
</dbReference>
<dbReference type="InterPro" id="IPR035400">
    <property type="entry name" value="Urocanase_N"/>
</dbReference>
<dbReference type="InterPro" id="IPR035085">
    <property type="entry name" value="Urocanase_Rossmann-like"/>
</dbReference>
<dbReference type="InterPro" id="IPR036190">
    <property type="entry name" value="Urocanase_sf"/>
</dbReference>
<dbReference type="NCBIfam" id="TIGR01228">
    <property type="entry name" value="hutU"/>
    <property type="match status" value="1"/>
</dbReference>
<dbReference type="NCBIfam" id="NF003820">
    <property type="entry name" value="PRK05414.1"/>
    <property type="match status" value="1"/>
</dbReference>
<dbReference type="PANTHER" id="PTHR12216">
    <property type="entry name" value="UROCANATE HYDRATASE"/>
    <property type="match status" value="1"/>
</dbReference>
<dbReference type="PANTHER" id="PTHR12216:SF4">
    <property type="entry name" value="UROCANATE HYDRATASE"/>
    <property type="match status" value="1"/>
</dbReference>
<dbReference type="Pfam" id="PF01175">
    <property type="entry name" value="Urocanase"/>
    <property type="match status" value="1"/>
</dbReference>
<dbReference type="Pfam" id="PF17392">
    <property type="entry name" value="Urocanase_C"/>
    <property type="match status" value="1"/>
</dbReference>
<dbReference type="Pfam" id="PF17391">
    <property type="entry name" value="Urocanase_N"/>
    <property type="match status" value="1"/>
</dbReference>
<dbReference type="PIRSF" id="PIRSF001423">
    <property type="entry name" value="Urocanate_hydrat"/>
    <property type="match status" value="1"/>
</dbReference>
<dbReference type="SUPFAM" id="SSF111326">
    <property type="entry name" value="Urocanase"/>
    <property type="match status" value="1"/>
</dbReference>
<dbReference type="PROSITE" id="PS01233">
    <property type="entry name" value="UROCANASE"/>
    <property type="match status" value="1"/>
</dbReference>
<reference key="1">
    <citation type="journal article" date="2001" name="Lancet">
        <title>Whole genome sequencing of meticillin-resistant Staphylococcus aureus.</title>
        <authorList>
            <person name="Kuroda M."/>
            <person name="Ohta T."/>
            <person name="Uchiyama I."/>
            <person name="Baba T."/>
            <person name="Yuzawa H."/>
            <person name="Kobayashi I."/>
            <person name="Cui L."/>
            <person name="Oguchi A."/>
            <person name="Aoki K."/>
            <person name="Nagai Y."/>
            <person name="Lian J.-Q."/>
            <person name="Ito T."/>
            <person name="Kanamori M."/>
            <person name="Matsumaru H."/>
            <person name="Maruyama A."/>
            <person name="Murakami H."/>
            <person name="Hosoyama A."/>
            <person name="Mizutani-Ui Y."/>
            <person name="Takahashi N.K."/>
            <person name="Sawano T."/>
            <person name="Inoue R."/>
            <person name="Kaito C."/>
            <person name="Sekimizu K."/>
            <person name="Hirakawa H."/>
            <person name="Kuhara S."/>
            <person name="Goto S."/>
            <person name="Yabuzaki J."/>
            <person name="Kanehisa M."/>
            <person name="Yamashita A."/>
            <person name="Oshima K."/>
            <person name="Furuya K."/>
            <person name="Yoshino C."/>
            <person name="Shiba T."/>
            <person name="Hattori M."/>
            <person name="Ogasawara N."/>
            <person name="Hayashi H."/>
            <person name="Hiramatsu K."/>
        </authorList>
    </citation>
    <scope>NUCLEOTIDE SEQUENCE [LARGE SCALE GENOMIC DNA]</scope>
    <source>
        <strain>N315</strain>
    </source>
</reference>
<reference key="2">
    <citation type="journal article" date="2005" name="J. Microbiol. Methods">
        <title>Correlation of proteomic and transcriptomic profiles of Staphylococcus aureus during the post-exponential phase of growth.</title>
        <authorList>
            <person name="Scherl A."/>
            <person name="Francois P."/>
            <person name="Bento M."/>
            <person name="Deshusses J.M."/>
            <person name="Charbonnier Y."/>
            <person name="Converset V."/>
            <person name="Huyghe A."/>
            <person name="Walter N."/>
            <person name="Hoogland C."/>
            <person name="Appel R.D."/>
            <person name="Sanchez J.-C."/>
            <person name="Zimmermann-Ivol C.G."/>
            <person name="Corthals G.L."/>
            <person name="Hochstrasser D.F."/>
            <person name="Schrenzel J."/>
        </authorList>
    </citation>
    <scope>IDENTIFICATION BY MASS SPECTROMETRY</scope>
    <source>
        <strain>N315</strain>
    </source>
</reference>
<reference key="3">
    <citation type="submission" date="2007-10" db="UniProtKB">
        <title>Shotgun proteomic analysis of total and membrane protein extracts of S. aureus strain N315.</title>
        <authorList>
            <person name="Vaezzadeh A.R."/>
            <person name="Deshusses J."/>
            <person name="Lescuyer P."/>
            <person name="Hochstrasser D.F."/>
        </authorList>
    </citation>
    <scope>IDENTIFICATION BY MASS SPECTROMETRY [LARGE SCALE ANALYSIS]</scope>
    <source>
        <strain>N315</strain>
    </source>
</reference>
<sequence length="553" mass="60633">MRKIQAKKGLSIECKGWEQEAVLRMLYNNLDPEVAERPEDLVVYGGIGKAARNWEAFEAIEKTLRELESDETMLVQSGKPVAVFKTHEEAPRVLISNSVLVPEWANWDHFNELDKKGLIMYGQMTAGSWIYIGSQGIVQGTYETFAELGNQHFNGDLAGTVTLTAGLGGMGGAQPLAITMNHGVAICVDVDETRVDKRIDTKYCDVKTADLDEALKLAEEAKERGEGLSIGLVGNAVDIHQAILEKGFKIDIITDQTSAHDPLNGYVPQGYSVEEAKVLREKDPKKYVELSQASMAKHVELMLEFQKRGAVAFDYGNNIRQVAFNNGVKNAFDFPGFVPAYIRPLFCEGKGPFRFAALSGDPKDIERADEEMRKLFPENEKLLRWLDLAEEKISYQGLPSRIAWLGYGERAKMGLALNRLVRDGEISAPIVIGRDHLDAGSVASPNRETESMKDGSDAVGDWAVLNALINTAAGGSWISFHHGGGVGMGYSLHAGMVVVADGSERAERRLERVLTTDPGMGVARHVDAGYDIAIQTAKEKGIHIPMIDKAGDK</sequence>
<gene>
    <name evidence="1" type="primary">hutU</name>
    <name type="ordered locus">SA2122</name>
</gene>
<evidence type="ECO:0000255" key="1">
    <source>
        <dbReference type="HAMAP-Rule" id="MF_00577"/>
    </source>
</evidence>
<feature type="chain" id="PRO_0000207355" description="Urocanate hydratase">
    <location>
        <begin position="1"/>
        <end position="553"/>
    </location>
</feature>
<feature type="binding site" evidence="1">
    <location>
        <begin position="45"/>
        <end position="46"/>
    </location>
    <ligand>
        <name>NAD(+)</name>
        <dbReference type="ChEBI" id="CHEBI:57540"/>
    </ligand>
</feature>
<feature type="binding site" evidence="1">
    <location>
        <position position="123"/>
    </location>
    <ligand>
        <name>NAD(+)</name>
        <dbReference type="ChEBI" id="CHEBI:57540"/>
    </ligand>
</feature>
<feature type="binding site" evidence="1">
    <location>
        <begin position="169"/>
        <end position="171"/>
    </location>
    <ligand>
        <name>NAD(+)</name>
        <dbReference type="ChEBI" id="CHEBI:57540"/>
    </ligand>
</feature>
<feature type="binding site" evidence="1">
    <location>
        <position position="189"/>
    </location>
    <ligand>
        <name>NAD(+)</name>
        <dbReference type="ChEBI" id="CHEBI:57540"/>
    </ligand>
</feature>
<feature type="binding site" evidence="1">
    <location>
        <position position="194"/>
    </location>
    <ligand>
        <name>NAD(+)</name>
        <dbReference type="ChEBI" id="CHEBI:57540"/>
    </ligand>
</feature>
<feature type="binding site" evidence="1">
    <location>
        <begin position="235"/>
        <end position="236"/>
    </location>
    <ligand>
        <name>NAD(+)</name>
        <dbReference type="ChEBI" id="CHEBI:57540"/>
    </ligand>
</feature>
<feature type="binding site" evidence="1">
    <location>
        <begin position="256"/>
        <end position="260"/>
    </location>
    <ligand>
        <name>NAD(+)</name>
        <dbReference type="ChEBI" id="CHEBI:57540"/>
    </ligand>
</feature>
<feature type="binding site" evidence="1">
    <location>
        <begin position="266"/>
        <end position="267"/>
    </location>
    <ligand>
        <name>NAD(+)</name>
        <dbReference type="ChEBI" id="CHEBI:57540"/>
    </ligand>
</feature>
<feature type="binding site" evidence="1">
    <location>
        <position position="315"/>
    </location>
    <ligand>
        <name>NAD(+)</name>
        <dbReference type="ChEBI" id="CHEBI:57540"/>
    </ligand>
</feature>
<feature type="binding site" evidence="1">
    <location>
        <position position="485"/>
    </location>
    <ligand>
        <name>NAD(+)</name>
        <dbReference type="ChEBI" id="CHEBI:57540"/>
    </ligand>
</feature>
<protein>
    <recommendedName>
        <fullName evidence="1">Urocanate hydratase</fullName>
        <shortName evidence="1">Urocanase</shortName>
        <ecNumber evidence="1">4.2.1.49</ecNumber>
    </recommendedName>
    <alternativeName>
        <fullName evidence="1">Imidazolonepropionate hydrolase</fullName>
    </alternativeName>
</protein>
<keyword id="KW-0963">Cytoplasm</keyword>
<keyword id="KW-0369">Histidine metabolism</keyword>
<keyword id="KW-0456">Lyase</keyword>
<keyword id="KW-0520">NAD</keyword>
<comment type="function">
    <text evidence="1">Catalyzes the conversion of urocanate to 4-imidazolone-5-propionate.</text>
</comment>
<comment type="catalytic activity">
    <reaction evidence="1">
        <text>4-imidazolone-5-propanoate = trans-urocanate + H2O</text>
        <dbReference type="Rhea" id="RHEA:13101"/>
        <dbReference type="ChEBI" id="CHEBI:15377"/>
        <dbReference type="ChEBI" id="CHEBI:17771"/>
        <dbReference type="ChEBI" id="CHEBI:77893"/>
        <dbReference type="EC" id="4.2.1.49"/>
    </reaction>
</comment>
<comment type="cofactor">
    <cofactor evidence="1">
        <name>NAD(+)</name>
        <dbReference type="ChEBI" id="CHEBI:57540"/>
    </cofactor>
    <text evidence="1">Binds 1 NAD(+) per subunit.</text>
</comment>
<comment type="pathway">
    <text evidence="1">Amino-acid degradation; L-histidine degradation into L-glutamate; N-formimidoyl-L-glutamate from L-histidine: step 2/3.</text>
</comment>
<comment type="subcellular location">
    <subcellularLocation>
        <location evidence="1">Cytoplasm</location>
    </subcellularLocation>
</comment>
<comment type="similarity">
    <text evidence="1">Belongs to the urocanase family.</text>
</comment>
<name>HUTU_STAAN</name>